<name>GUF1_UNCRE</name>
<accession>C4JWU3</accession>
<feature type="transit peptide" description="Mitochondrion" evidence="1">
    <location>
        <begin position="1"/>
        <end position="37"/>
    </location>
</feature>
<feature type="chain" id="PRO_0000402907" description="Translation factor GUF1, mitochondrial">
    <location>
        <begin position="38"/>
        <end position="663"/>
    </location>
</feature>
<feature type="domain" description="tr-type G">
    <location>
        <begin position="65"/>
        <end position="245"/>
    </location>
</feature>
<feature type="binding site" evidence="1">
    <location>
        <begin position="74"/>
        <end position="81"/>
    </location>
    <ligand>
        <name>GTP</name>
        <dbReference type="ChEBI" id="CHEBI:37565"/>
    </ligand>
</feature>
<feature type="binding site" evidence="1">
    <location>
        <begin position="138"/>
        <end position="142"/>
    </location>
    <ligand>
        <name>GTP</name>
        <dbReference type="ChEBI" id="CHEBI:37565"/>
    </ligand>
</feature>
<feature type="binding site" evidence="1">
    <location>
        <begin position="192"/>
        <end position="195"/>
    </location>
    <ligand>
        <name>GTP</name>
        <dbReference type="ChEBI" id="CHEBI:37565"/>
    </ligand>
</feature>
<proteinExistence type="inferred from homology"/>
<gene>
    <name evidence="1" type="primary">GUF1</name>
    <name type="ORF">UREG_06116</name>
</gene>
<reference key="1">
    <citation type="journal article" date="2009" name="Genome Res.">
        <title>Comparative genomic analyses of the human fungal pathogens Coccidioides and their relatives.</title>
        <authorList>
            <person name="Sharpton T.J."/>
            <person name="Stajich J.E."/>
            <person name="Rounsley S.D."/>
            <person name="Gardner M.J."/>
            <person name="Wortman J.R."/>
            <person name="Jordar V.S."/>
            <person name="Maiti R."/>
            <person name="Kodira C.D."/>
            <person name="Neafsey D.E."/>
            <person name="Zeng Q."/>
            <person name="Hung C.-Y."/>
            <person name="McMahan C."/>
            <person name="Muszewska A."/>
            <person name="Grynberg M."/>
            <person name="Mandel M.A."/>
            <person name="Kellner E.M."/>
            <person name="Barker B.M."/>
            <person name="Galgiani J.N."/>
            <person name="Orbach M.J."/>
            <person name="Kirkland T.N."/>
            <person name="Cole G.T."/>
            <person name="Henn M.R."/>
            <person name="Birren B.W."/>
            <person name="Taylor J.W."/>
        </authorList>
    </citation>
    <scope>NUCLEOTIDE SEQUENCE [LARGE SCALE GENOMIC DNA]</scope>
    <source>
        <strain>UAMH 1704</strain>
    </source>
</reference>
<evidence type="ECO:0000255" key="1">
    <source>
        <dbReference type="HAMAP-Rule" id="MF_03137"/>
    </source>
</evidence>
<evidence type="ECO:0000305" key="2"/>
<sequence>MRGCLQSVRLLTTALGQSPRRPLPFAFRLPPNASRLFSTCASRAAATAKKPPSELEERILAIPIERYRNFCIVAHVDHGKSTLSDRLLELTGTIEPGSNKQVLDKLDVERERGITVKAQTCTMLYNHKGDDYLLHLVDTPGHVDFRAEVSRSYASCGGALLLVDASQGVQAQTVANFYLAFAQGLELVPVINKVDLPSADPKRALEQMETTFELDTDKAVLVSAKTGLNVQQLLPTIVEQIPAPIGDHTKPLRVLLVDSWYDTYKGVILLIRVFDGSVKAGDQLVSFATQKKYIVGEVGIMYPNQTAQSVLRAGQVGYVYFNPGMKKSQEAKIGDTLTKVGSEKLVKPLPGFEEPKAMVFVAAYPVHADDFPHLEDSINQLLLNDRSITVKKESSEALGAGFRLGFLGTLHCSVFQDRLQQEHGANIIITPPSVPCKVLWNSGEETVITSPVDFPDGDSNRMKVKEFQEPYVLTTLTFPHEYLGKVIELCEGNRGEQVSLEFFTASQVILKYQLPLAQLVDDFFGKLKGLTKGYASLDYEESGWRKSNVVKLKLLVNKMPVDAVSRVVHISQVPRLGKQWVTKFKEHVDRQMFEIVIQAAIGNKIVARETIKPYRKDVLAKLHASDVTRRKKLLERQKEGRKKLQAVGNVVIEHKAFQAFLSK</sequence>
<comment type="function">
    <text evidence="1">Promotes mitochondrial protein synthesis. May act as a fidelity factor of the translation reaction, by catalyzing a one-codon backward translocation of tRNAs on improperly translocated ribosomes. Binds to mitochondrial ribosomes in a GTP-dependent manner.</text>
</comment>
<comment type="catalytic activity">
    <reaction evidence="1">
        <text>GTP + H2O = GDP + phosphate + H(+)</text>
        <dbReference type="Rhea" id="RHEA:19669"/>
        <dbReference type="ChEBI" id="CHEBI:15377"/>
        <dbReference type="ChEBI" id="CHEBI:15378"/>
        <dbReference type="ChEBI" id="CHEBI:37565"/>
        <dbReference type="ChEBI" id="CHEBI:43474"/>
        <dbReference type="ChEBI" id="CHEBI:58189"/>
    </reaction>
</comment>
<comment type="subcellular location">
    <subcellularLocation>
        <location evidence="1">Mitochondrion inner membrane</location>
        <topology evidence="1">Peripheral membrane protein</topology>
        <orientation evidence="1">Matrix side</orientation>
    </subcellularLocation>
</comment>
<comment type="similarity">
    <text evidence="2">Belongs to the TRAFAC class translation factor GTPase superfamily. Classic translation factor GTPase family. LepA subfamily.</text>
</comment>
<organism>
    <name type="scientific">Uncinocarpus reesii (strain UAMH 1704)</name>
    <dbReference type="NCBI Taxonomy" id="336963"/>
    <lineage>
        <taxon>Eukaryota</taxon>
        <taxon>Fungi</taxon>
        <taxon>Dikarya</taxon>
        <taxon>Ascomycota</taxon>
        <taxon>Pezizomycotina</taxon>
        <taxon>Eurotiomycetes</taxon>
        <taxon>Eurotiomycetidae</taxon>
        <taxon>Onygenales</taxon>
        <taxon>Onygenaceae</taxon>
        <taxon>Uncinocarpus</taxon>
    </lineage>
</organism>
<dbReference type="EC" id="3.6.5.-"/>
<dbReference type="EMBL" id="CH476618">
    <property type="protein sequence ID" value="EEP81251.1"/>
    <property type="molecule type" value="Genomic_DNA"/>
</dbReference>
<dbReference type="RefSeq" id="XP_002583149.1">
    <property type="nucleotide sequence ID" value="XM_002583103.1"/>
</dbReference>
<dbReference type="SMR" id="C4JWU3"/>
<dbReference type="FunCoup" id="C4JWU3">
    <property type="interactions" value="637"/>
</dbReference>
<dbReference type="STRING" id="336963.C4JWU3"/>
<dbReference type="GeneID" id="8443270"/>
<dbReference type="KEGG" id="ure:UREG_06116"/>
<dbReference type="VEuPathDB" id="FungiDB:UREG_06116"/>
<dbReference type="eggNOG" id="KOG0462">
    <property type="taxonomic scope" value="Eukaryota"/>
</dbReference>
<dbReference type="HOGENOM" id="CLU_009995_3_1_1"/>
<dbReference type="InParanoid" id="C4JWU3"/>
<dbReference type="OMA" id="QVKCDEN"/>
<dbReference type="OrthoDB" id="1074at2759"/>
<dbReference type="Proteomes" id="UP000002058">
    <property type="component" value="Unassembled WGS sequence"/>
</dbReference>
<dbReference type="GO" id="GO:0005743">
    <property type="term" value="C:mitochondrial inner membrane"/>
    <property type="evidence" value="ECO:0007669"/>
    <property type="project" value="UniProtKB-SubCell"/>
</dbReference>
<dbReference type="GO" id="GO:0005759">
    <property type="term" value="C:mitochondrial matrix"/>
    <property type="evidence" value="ECO:0007669"/>
    <property type="project" value="UniProtKB-UniRule"/>
</dbReference>
<dbReference type="GO" id="GO:0005525">
    <property type="term" value="F:GTP binding"/>
    <property type="evidence" value="ECO:0007669"/>
    <property type="project" value="UniProtKB-UniRule"/>
</dbReference>
<dbReference type="GO" id="GO:0003924">
    <property type="term" value="F:GTPase activity"/>
    <property type="evidence" value="ECO:0007669"/>
    <property type="project" value="UniProtKB-UniRule"/>
</dbReference>
<dbReference type="GO" id="GO:0097177">
    <property type="term" value="F:mitochondrial ribosome binding"/>
    <property type="evidence" value="ECO:0007669"/>
    <property type="project" value="EnsemblFungi"/>
</dbReference>
<dbReference type="GO" id="GO:0045727">
    <property type="term" value="P:positive regulation of translation"/>
    <property type="evidence" value="ECO:0007669"/>
    <property type="project" value="UniProtKB-UniRule"/>
</dbReference>
<dbReference type="GO" id="GO:0006412">
    <property type="term" value="P:translation"/>
    <property type="evidence" value="ECO:0007669"/>
    <property type="project" value="UniProtKB-KW"/>
</dbReference>
<dbReference type="CDD" id="cd03699">
    <property type="entry name" value="EF4_II"/>
    <property type="match status" value="1"/>
</dbReference>
<dbReference type="CDD" id="cd16260">
    <property type="entry name" value="EF4_III"/>
    <property type="match status" value="1"/>
</dbReference>
<dbReference type="CDD" id="cd01890">
    <property type="entry name" value="LepA"/>
    <property type="match status" value="1"/>
</dbReference>
<dbReference type="CDD" id="cd03709">
    <property type="entry name" value="lepA_C"/>
    <property type="match status" value="1"/>
</dbReference>
<dbReference type="FunFam" id="3.40.50.300:FF:000078">
    <property type="entry name" value="Elongation factor 4"/>
    <property type="match status" value="1"/>
</dbReference>
<dbReference type="FunFam" id="2.40.30.10:FF:000015">
    <property type="entry name" value="Translation factor GUF1, mitochondrial"/>
    <property type="match status" value="1"/>
</dbReference>
<dbReference type="FunFam" id="3.30.70.240:FF:000007">
    <property type="entry name" value="Translation factor GUF1, mitochondrial"/>
    <property type="match status" value="1"/>
</dbReference>
<dbReference type="FunFam" id="3.30.70.2570:FF:000001">
    <property type="entry name" value="Translation factor GUF1, mitochondrial"/>
    <property type="match status" value="1"/>
</dbReference>
<dbReference type="FunFam" id="3.30.70.870:FF:000004">
    <property type="entry name" value="Translation factor GUF1, mitochondrial"/>
    <property type="match status" value="1"/>
</dbReference>
<dbReference type="Gene3D" id="3.30.70.240">
    <property type="match status" value="1"/>
</dbReference>
<dbReference type="Gene3D" id="3.30.70.2570">
    <property type="entry name" value="Elongation factor 4, C-terminal domain"/>
    <property type="match status" value="1"/>
</dbReference>
<dbReference type="Gene3D" id="3.30.70.870">
    <property type="entry name" value="Elongation Factor G (Translational Gtpase), domain 3"/>
    <property type="match status" value="1"/>
</dbReference>
<dbReference type="Gene3D" id="3.40.50.300">
    <property type="entry name" value="P-loop containing nucleotide triphosphate hydrolases"/>
    <property type="match status" value="1"/>
</dbReference>
<dbReference type="Gene3D" id="2.40.30.10">
    <property type="entry name" value="Translation factors"/>
    <property type="match status" value="1"/>
</dbReference>
<dbReference type="HAMAP" id="MF_00071">
    <property type="entry name" value="LepA"/>
    <property type="match status" value="1"/>
</dbReference>
<dbReference type="InterPro" id="IPR006297">
    <property type="entry name" value="EF-4"/>
</dbReference>
<dbReference type="InterPro" id="IPR035647">
    <property type="entry name" value="EFG_III/V"/>
</dbReference>
<dbReference type="InterPro" id="IPR000640">
    <property type="entry name" value="EFG_V-like"/>
</dbReference>
<dbReference type="InterPro" id="IPR004161">
    <property type="entry name" value="EFTu-like_2"/>
</dbReference>
<dbReference type="InterPro" id="IPR031157">
    <property type="entry name" value="G_TR_CS"/>
</dbReference>
<dbReference type="InterPro" id="IPR038363">
    <property type="entry name" value="LepA_C_sf"/>
</dbReference>
<dbReference type="InterPro" id="IPR013842">
    <property type="entry name" value="LepA_CTD"/>
</dbReference>
<dbReference type="InterPro" id="IPR035654">
    <property type="entry name" value="LepA_IV"/>
</dbReference>
<dbReference type="InterPro" id="IPR027417">
    <property type="entry name" value="P-loop_NTPase"/>
</dbReference>
<dbReference type="InterPro" id="IPR005225">
    <property type="entry name" value="Small_GTP-bd"/>
</dbReference>
<dbReference type="InterPro" id="IPR000795">
    <property type="entry name" value="T_Tr_GTP-bd_dom"/>
</dbReference>
<dbReference type="InterPro" id="IPR009000">
    <property type="entry name" value="Transl_B-barrel_sf"/>
</dbReference>
<dbReference type="NCBIfam" id="TIGR01393">
    <property type="entry name" value="lepA"/>
    <property type="match status" value="1"/>
</dbReference>
<dbReference type="NCBIfam" id="TIGR00231">
    <property type="entry name" value="small_GTP"/>
    <property type="match status" value="1"/>
</dbReference>
<dbReference type="PANTHER" id="PTHR43512:SF7">
    <property type="entry name" value="TRANSLATION FACTOR GUF1, MITOCHONDRIAL"/>
    <property type="match status" value="1"/>
</dbReference>
<dbReference type="PANTHER" id="PTHR43512">
    <property type="entry name" value="TRANSLATION FACTOR GUF1-RELATED"/>
    <property type="match status" value="1"/>
</dbReference>
<dbReference type="Pfam" id="PF00679">
    <property type="entry name" value="EFG_C"/>
    <property type="match status" value="1"/>
</dbReference>
<dbReference type="Pfam" id="PF00009">
    <property type="entry name" value="GTP_EFTU"/>
    <property type="match status" value="1"/>
</dbReference>
<dbReference type="Pfam" id="PF03144">
    <property type="entry name" value="GTP_EFTU_D2"/>
    <property type="match status" value="1"/>
</dbReference>
<dbReference type="Pfam" id="PF06421">
    <property type="entry name" value="LepA_C"/>
    <property type="match status" value="1"/>
</dbReference>
<dbReference type="PRINTS" id="PR00315">
    <property type="entry name" value="ELONGATNFCT"/>
</dbReference>
<dbReference type="SUPFAM" id="SSF54980">
    <property type="entry name" value="EF-G C-terminal domain-like"/>
    <property type="match status" value="2"/>
</dbReference>
<dbReference type="SUPFAM" id="SSF52540">
    <property type="entry name" value="P-loop containing nucleoside triphosphate hydrolases"/>
    <property type="match status" value="1"/>
</dbReference>
<dbReference type="SUPFAM" id="SSF50447">
    <property type="entry name" value="Translation proteins"/>
    <property type="match status" value="1"/>
</dbReference>
<dbReference type="PROSITE" id="PS00301">
    <property type="entry name" value="G_TR_1"/>
    <property type="match status" value="1"/>
</dbReference>
<dbReference type="PROSITE" id="PS51722">
    <property type="entry name" value="G_TR_2"/>
    <property type="match status" value="1"/>
</dbReference>
<keyword id="KW-0342">GTP-binding</keyword>
<keyword id="KW-0378">Hydrolase</keyword>
<keyword id="KW-0472">Membrane</keyword>
<keyword id="KW-0496">Mitochondrion</keyword>
<keyword id="KW-0999">Mitochondrion inner membrane</keyword>
<keyword id="KW-0547">Nucleotide-binding</keyword>
<keyword id="KW-0648">Protein biosynthesis</keyword>
<keyword id="KW-1185">Reference proteome</keyword>
<keyword id="KW-0809">Transit peptide</keyword>
<protein>
    <recommendedName>
        <fullName evidence="1">Translation factor GUF1, mitochondrial</fullName>
        <ecNumber>3.6.5.-</ecNumber>
    </recommendedName>
    <alternativeName>
        <fullName evidence="1">Elongation factor 4 homolog</fullName>
        <shortName evidence="1">EF-4</shortName>
    </alternativeName>
    <alternativeName>
        <fullName evidence="1">GTPase GUF1</fullName>
    </alternativeName>
    <alternativeName>
        <fullName evidence="1">Ribosomal back-translocase</fullName>
    </alternativeName>
</protein>